<accession>A4J2B3</accession>
<name>MURB_DESRM</name>
<feature type="chain" id="PRO_1000071038" description="UDP-N-acetylenolpyruvoylglucosamine reductase">
    <location>
        <begin position="1"/>
        <end position="303"/>
    </location>
</feature>
<feature type="domain" description="FAD-binding PCMH-type" evidence="1">
    <location>
        <begin position="32"/>
        <end position="212"/>
    </location>
</feature>
<feature type="active site" evidence="1">
    <location>
        <position position="176"/>
    </location>
</feature>
<feature type="active site" description="Proton donor" evidence="1">
    <location>
        <position position="226"/>
    </location>
</feature>
<feature type="active site" evidence="1">
    <location>
        <position position="296"/>
    </location>
</feature>
<reference key="1">
    <citation type="submission" date="2007-03" db="EMBL/GenBank/DDBJ databases">
        <title>Complete sequence of Desulfotomaculum reducens MI-1.</title>
        <authorList>
            <consortium name="US DOE Joint Genome Institute"/>
            <person name="Copeland A."/>
            <person name="Lucas S."/>
            <person name="Lapidus A."/>
            <person name="Barry K."/>
            <person name="Detter J.C."/>
            <person name="Glavina del Rio T."/>
            <person name="Hammon N."/>
            <person name="Israni S."/>
            <person name="Dalin E."/>
            <person name="Tice H."/>
            <person name="Pitluck S."/>
            <person name="Sims D."/>
            <person name="Brettin T."/>
            <person name="Bruce D."/>
            <person name="Han C."/>
            <person name="Tapia R."/>
            <person name="Schmutz J."/>
            <person name="Larimer F."/>
            <person name="Land M."/>
            <person name="Hauser L."/>
            <person name="Kyrpides N."/>
            <person name="Kim E."/>
            <person name="Tebo B.M."/>
            <person name="Richardson P."/>
        </authorList>
    </citation>
    <scope>NUCLEOTIDE SEQUENCE [LARGE SCALE GENOMIC DNA]</scope>
    <source>
        <strain>ATCC BAA-1160 / DSM 100696 / MI-1</strain>
    </source>
</reference>
<gene>
    <name evidence="1" type="primary">murB</name>
    <name type="ordered locus">Dred_0677</name>
</gene>
<proteinExistence type="inferred from homology"/>
<organism>
    <name type="scientific">Desulforamulus reducens (strain ATCC BAA-1160 / DSM 100696 / MI-1)</name>
    <name type="common">Desulfotomaculum reducens</name>
    <dbReference type="NCBI Taxonomy" id="349161"/>
    <lineage>
        <taxon>Bacteria</taxon>
        <taxon>Bacillati</taxon>
        <taxon>Bacillota</taxon>
        <taxon>Clostridia</taxon>
        <taxon>Eubacteriales</taxon>
        <taxon>Peptococcaceae</taxon>
        <taxon>Desulforamulus</taxon>
    </lineage>
</organism>
<dbReference type="EC" id="1.3.1.98" evidence="1"/>
<dbReference type="EMBL" id="CP000612">
    <property type="protein sequence ID" value="ABO49216.1"/>
    <property type="molecule type" value="Genomic_DNA"/>
</dbReference>
<dbReference type="RefSeq" id="WP_011877052.1">
    <property type="nucleotide sequence ID" value="NC_009253.1"/>
</dbReference>
<dbReference type="SMR" id="A4J2B3"/>
<dbReference type="STRING" id="349161.Dred_0677"/>
<dbReference type="KEGG" id="drm:Dred_0677"/>
<dbReference type="eggNOG" id="COG0812">
    <property type="taxonomic scope" value="Bacteria"/>
</dbReference>
<dbReference type="HOGENOM" id="CLU_035304_1_1_9"/>
<dbReference type="OrthoDB" id="9804753at2"/>
<dbReference type="UniPathway" id="UPA00219"/>
<dbReference type="Proteomes" id="UP000001556">
    <property type="component" value="Chromosome"/>
</dbReference>
<dbReference type="GO" id="GO:0005829">
    <property type="term" value="C:cytosol"/>
    <property type="evidence" value="ECO:0007669"/>
    <property type="project" value="TreeGrafter"/>
</dbReference>
<dbReference type="GO" id="GO:0071949">
    <property type="term" value="F:FAD binding"/>
    <property type="evidence" value="ECO:0007669"/>
    <property type="project" value="InterPro"/>
</dbReference>
<dbReference type="GO" id="GO:0008762">
    <property type="term" value="F:UDP-N-acetylmuramate dehydrogenase activity"/>
    <property type="evidence" value="ECO:0007669"/>
    <property type="project" value="UniProtKB-UniRule"/>
</dbReference>
<dbReference type="GO" id="GO:0051301">
    <property type="term" value="P:cell division"/>
    <property type="evidence" value="ECO:0007669"/>
    <property type="project" value="UniProtKB-KW"/>
</dbReference>
<dbReference type="GO" id="GO:0071555">
    <property type="term" value="P:cell wall organization"/>
    <property type="evidence" value="ECO:0007669"/>
    <property type="project" value="UniProtKB-KW"/>
</dbReference>
<dbReference type="GO" id="GO:0009252">
    <property type="term" value="P:peptidoglycan biosynthetic process"/>
    <property type="evidence" value="ECO:0007669"/>
    <property type="project" value="UniProtKB-UniRule"/>
</dbReference>
<dbReference type="GO" id="GO:0008360">
    <property type="term" value="P:regulation of cell shape"/>
    <property type="evidence" value="ECO:0007669"/>
    <property type="project" value="UniProtKB-KW"/>
</dbReference>
<dbReference type="Gene3D" id="3.30.465.10">
    <property type="match status" value="1"/>
</dbReference>
<dbReference type="Gene3D" id="3.90.78.10">
    <property type="entry name" value="UDP-N-acetylenolpyruvoylglucosamine reductase, C-terminal domain"/>
    <property type="match status" value="1"/>
</dbReference>
<dbReference type="Gene3D" id="3.30.43.10">
    <property type="entry name" value="Uridine Diphospho-n-acetylenolpyruvylglucosamine Reductase, domain 2"/>
    <property type="match status" value="1"/>
</dbReference>
<dbReference type="HAMAP" id="MF_00037">
    <property type="entry name" value="MurB"/>
    <property type="match status" value="1"/>
</dbReference>
<dbReference type="InterPro" id="IPR016166">
    <property type="entry name" value="FAD-bd_PCMH"/>
</dbReference>
<dbReference type="InterPro" id="IPR036318">
    <property type="entry name" value="FAD-bd_PCMH-like_sf"/>
</dbReference>
<dbReference type="InterPro" id="IPR016167">
    <property type="entry name" value="FAD-bd_PCMH_sub1"/>
</dbReference>
<dbReference type="InterPro" id="IPR016169">
    <property type="entry name" value="FAD-bd_PCMH_sub2"/>
</dbReference>
<dbReference type="InterPro" id="IPR003170">
    <property type="entry name" value="MurB"/>
</dbReference>
<dbReference type="InterPro" id="IPR011601">
    <property type="entry name" value="MurB_C"/>
</dbReference>
<dbReference type="InterPro" id="IPR036635">
    <property type="entry name" value="MurB_C_sf"/>
</dbReference>
<dbReference type="InterPro" id="IPR006094">
    <property type="entry name" value="Oxid_FAD_bind_N"/>
</dbReference>
<dbReference type="NCBIfam" id="TIGR00179">
    <property type="entry name" value="murB"/>
    <property type="match status" value="1"/>
</dbReference>
<dbReference type="NCBIfam" id="NF010480">
    <property type="entry name" value="PRK13905.1"/>
    <property type="match status" value="1"/>
</dbReference>
<dbReference type="PANTHER" id="PTHR21071">
    <property type="entry name" value="UDP-N-ACETYLENOLPYRUVOYLGLUCOSAMINE REDUCTASE"/>
    <property type="match status" value="1"/>
</dbReference>
<dbReference type="PANTHER" id="PTHR21071:SF4">
    <property type="entry name" value="UDP-N-ACETYLENOLPYRUVOYLGLUCOSAMINE REDUCTASE"/>
    <property type="match status" value="1"/>
</dbReference>
<dbReference type="Pfam" id="PF01565">
    <property type="entry name" value="FAD_binding_4"/>
    <property type="match status" value="1"/>
</dbReference>
<dbReference type="Pfam" id="PF02873">
    <property type="entry name" value="MurB_C"/>
    <property type="match status" value="1"/>
</dbReference>
<dbReference type="SUPFAM" id="SSF56176">
    <property type="entry name" value="FAD-binding/transporter-associated domain-like"/>
    <property type="match status" value="1"/>
</dbReference>
<dbReference type="SUPFAM" id="SSF56194">
    <property type="entry name" value="Uridine diphospho-N-Acetylenolpyruvylglucosamine reductase, MurB, C-terminal domain"/>
    <property type="match status" value="1"/>
</dbReference>
<dbReference type="PROSITE" id="PS51387">
    <property type="entry name" value="FAD_PCMH"/>
    <property type="match status" value="1"/>
</dbReference>
<protein>
    <recommendedName>
        <fullName evidence="1">UDP-N-acetylenolpyruvoylglucosamine reductase</fullName>
        <ecNumber evidence="1">1.3.1.98</ecNumber>
    </recommendedName>
    <alternativeName>
        <fullName evidence="1">UDP-N-acetylmuramate dehydrogenase</fullName>
    </alternativeName>
</protein>
<comment type="function">
    <text evidence="1">Cell wall formation.</text>
</comment>
<comment type="catalytic activity">
    <reaction evidence="1">
        <text>UDP-N-acetyl-alpha-D-muramate + NADP(+) = UDP-N-acetyl-3-O-(1-carboxyvinyl)-alpha-D-glucosamine + NADPH + H(+)</text>
        <dbReference type="Rhea" id="RHEA:12248"/>
        <dbReference type="ChEBI" id="CHEBI:15378"/>
        <dbReference type="ChEBI" id="CHEBI:57783"/>
        <dbReference type="ChEBI" id="CHEBI:58349"/>
        <dbReference type="ChEBI" id="CHEBI:68483"/>
        <dbReference type="ChEBI" id="CHEBI:70757"/>
        <dbReference type="EC" id="1.3.1.98"/>
    </reaction>
</comment>
<comment type="cofactor">
    <cofactor evidence="1">
        <name>FAD</name>
        <dbReference type="ChEBI" id="CHEBI:57692"/>
    </cofactor>
</comment>
<comment type="pathway">
    <text evidence="1">Cell wall biogenesis; peptidoglycan biosynthesis.</text>
</comment>
<comment type="subcellular location">
    <subcellularLocation>
        <location evidence="1">Cytoplasm</location>
    </subcellularLocation>
</comment>
<comment type="similarity">
    <text evidence="1">Belongs to the MurB family.</text>
</comment>
<evidence type="ECO:0000255" key="1">
    <source>
        <dbReference type="HAMAP-Rule" id="MF_00037"/>
    </source>
</evidence>
<sequence length="303" mass="32593">MIYTSLAGELQSLVKGSIQINEPMRKHTTWKIGGKADLFLNPSDKEDIRQAVEFAREKAIPITVIGNGSNLLVKDGGIRGLVIKVGRGMAKITIEGTSIKAGAGALLPELAVFACKNSLGGFGFAAGIPGSLGGAIVMNAGAMNGCVSDVLQSIVVLNERNQFEVLTKDHLNFAYRTSNLQSRGLICVETCWQGYAKDQWLIEQETKEYLAKRKAAQPQGFPNAGSVFKNPEGDFAGRLIEGCGGKGLRVGDAEVSSKHANWILNLGRATAQDVLILIDHLKQMVQERFGVLLQLEVKVLGED</sequence>
<keyword id="KW-0131">Cell cycle</keyword>
<keyword id="KW-0132">Cell division</keyword>
<keyword id="KW-0133">Cell shape</keyword>
<keyword id="KW-0961">Cell wall biogenesis/degradation</keyword>
<keyword id="KW-0963">Cytoplasm</keyword>
<keyword id="KW-0274">FAD</keyword>
<keyword id="KW-0285">Flavoprotein</keyword>
<keyword id="KW-0521">NADP</keyword>
<keyword id="KW-0560">Oxidoreductase</keyword>
<keyword id="KW-0573">Peptidoglycan synthesis</keyword>
<keyword id="KW-1185">Reference proteome</keyword>